<organism>
    <name type="scientific">Candida glabrata (strain ATCC 2001 / BCRC 20586 / JCM 3761 / NBRC 0622 / NRRL Y-65 / CBS 138)</name>
    <name type="common">Yeast</name>
    <name type="synonym">Nakaseomyces glabratus</name>
    <dbReference type="NCBI Taxonomy" id="284593"/>
    <lineage>
        <taxon>Eukaryota</taxon>
        <taxon>Fungi</taxon>
        <taxon>Dikarya</taxon>
        <taxon>Ascomycota</taxon>
        <taxon>Saccharomycotina</taxon>
        <taxon>Saccharomycetes</taxon>
        <taxon>Saccharomycetales</taxon>
        <taxon>Saccharomycetaceae</taxon>
        <taxon>Nakaseomyces</taxon>
    </lineage>
</organism>
<protein>
    <recommendedName>
        <fullName>Carbon catabolite-derepressing protein kinase</fullName>
        <ecNumber>2.7.11.1</ecNumber>
    </recommendedName>
</protein>
<evidence type="ECO:0000250" key="1"/>
<evidence type="ECO:0000255" key="2">
    <source>
        <dbReference type="PROSITE-ProRule" id="PRU00159"/>
    </source>
</evidence>
<evidence type="ECO:0000255" key="3">
    <source>
        <dbReference type="PROSITE-ProRule" id="PRU10027"/>
    </source>
</evidence>
<evidence type="ECO:0000256" key="4">
    <source>
        <dbReference type="SAM" id="MobiDB-lite"/>
    </source>
</evidence>
<evidence type="ECO:0000305" key="5"/>
<proteinExistence type="inferred from homology"/>
<gene>
    <name type="primary">SNF1</name>
    <name type="ordered locus">CAGL0M08910g</name>
</gene>
<accession>Q00372</accession>
<accession>Q6FJ61</accession>
<sequence>MENKEHHHHHHHHHHHHSNGSYVSNKVSSLADGSRVGNYQIVKTLGEGSFGKVKLAYHVTTGQKVALKIINKKVLAKSDMQGRIEREISYLRLLRHPHIIKLYDVIKSKDEIIMVIEYAGNELFDYIVQRNKMSEQEARRFFQQIISAVEYCHRHKIVHRDLKPENLLLDEHLNVKIADFGLSNIMTDGNFLKTSCGSPNYAAPEVISGKLYAGPEVDVWSCGVILYVMLCRRLPFDDESIPVLFKNISNGVYTLPKFLSPGASDLIKRMLIVNPLNRISIHEIMQDEWFKVDLAEYLVPQDLKQQEQFNKKSGNEENVEEIDDEMVVTLSKTMGYDKDEIYEALESSEDTPAYNEIRNAYILIKDNKSLIKDMKQDNNVTQELDTFLSQSPPTFQQNGDGMKASEDQKKKHSGRRLASSVTQQRTFHQPPFMDQSKEEDSTISILPTSLPQIHRANMLAQGLPAASKISPLVTKKSKTRWHFGIRSRSYPLDVMGEIYIALKNLGAEWAKPSEEDLWTIRVRWKYDSDESRLIEDGVKKIPNLMKIVIQLFQIETNNYLVDFKFDGWESTYGDSTISTNMSEDEMSTFSAYPFLHLTTKLIMELAVNSQGN</sequence>
<feature type="chain" id="PRO_0000086667" description="Carbon catabolite-derepressing protein kinase">
    <location>
        <begin position="1"/>
        <end position="612"/>
    </location>
</feature>
<feature type="domain" description="Protein kinase" evidence="2">
    <location>
        <begin position="39"/>
        <end position="290"/>
    </location>
</feature>
<feature type="region of interest" description="Disordered" evidence="4">
    <location>
        <begin position="1"/>
        <end position="25"/>
    </location>
</feature>
<feature type="region of interest" description="Disordered" evidence="4">
    <location>
        <begin position="388"/>
        <end position="426"/>
    </location>
</feature>
<feature type="compositionally biased region" description="Basic residues" evidence="4">
    <location>
        <begin position="1"/>
        <end position="18"/>
    </location>
</feature>
<feature type="compositionally biased region" description="Polar residues" evidence="4">
    <location>
        <begin position="388"/>
        <end position="399"/>
    </location>
</feature>
<feature type="active site" description="Proton acceptor" evidence="2 3">
    <location>
        <position position="161"/>
    </location>
</feature>
<feature type="binding site" evidence="2">
    <location>
        <begin position="45"/>
        <end position="53"/>
    </location>
    <ligand>
        <name>ATP</name>
        <dbReference type="ChEBI" id="CHEBI:30616"/>
    </ligand>
</feature>
<feature type="binding site" evidence="2">
    <location>
        <position position="68"/>
    </location>
    <ligand>
        <name>ATP</name>
        <dbReference type="ChEBI" id="CHEBI:30616"/>
    </ligand>
</feature>
<feature type="modified residue" description="Phosphothreonine; by autocatalysis" evidence="1">
    <location>
        <position position="194"/>
    </location>
</feature>
<feature type="sequence conflict" description="In Ref. 1; AAB48642." evidence="5" ref="1">
    <original>I</original>
    <variation>S</variation>
    <location>
        <position position="69"/>
    </location>
</feature>
<feature type="sequence conflict" description="In Ref. 1; AAB48642." evidence="5" ref="1">
    <original>E</original>
    <variation>D</variation>
    <location>
        <position position="85"/>
    </location>
</feature>
<feature type="sequence conflict" description="In Ref. 1; AAB48642." evidence="5" ref="1">
    <location>
        <position position="446"/>
    </location>
</feature>
<feature type="sequence conflict" description="In Ref. 1; AAB48642." evidence="5" ref="1">
    <original>E</original>
    <variation>H</variation>
    <location>
        <position position="497"/>
    </location>
</feature>
<feature type="sequence conflict" description="In Ref. 1; AAB48642." evidence="5" ref="1">
    <original>K</original>
    <variation>N</variation>
    <location>
        <position position="511"/>
    </location>
</feature>
<reference key="1">
    <citation type="journal article" date="1996" name="Infect. Immun.">
        <title>Disruption of the SNF1 gene abolishes trehalose utilization in the pathogenic yeast Candida glabrata.</title>
        <authorList>
            <person name="Petter R."/>
            <person name="Kwon-Chung K.J."/>
        </authorList>
    </citation>
    <scope>NUCLEOTIDE SEQUENCE [GENOMIC DNA]</scope>
    <source>
        <strain>ATCC 90030 / DSM 11226 / NCCLS 84</strain>
    </source>
</reference>
<reference key="2">
    <citation type="journal article" date="2004" name="Nature">
        <title>Genome evolution in yeasts.</title>
        <authorList>
            <person name="Dujon B."/>
            <person name="Sherman D."/>
            <person name="Fischer G."/>
            <person name="Durrens P."/>
            <person name="Casaregola S."/>
            <person name="Lafontaine I."/>
            <person name="de Montigny J."/>
            <person name="Marck C."/>
            <person name="Neuveglise C."/>
            <person name="Talla E."/>
            <person name="Goffard N."/>
            <person name="Frangeul L."/>
            <person name="Aigle M."/>
            <person name="Anthouard V."/>
            <person name="Babour A."/>
            <person name="Barbe V."/>
            <person name="Barnay S."/>
            <person name="Blanchin S."/>
            <person name="Beckerich J.-M."/>
            <person name="Beyne E."/>
            <person name="Bleykasten C."/>
            <person name="Boisrame A."/>
            <person name="Boyer J."/>
            <person name="Cattolico L."/>
            <person name="Confanioleri F."/>
            <person name="de Daruvar A."/>
            <person name="Despons L."/>
            <person name="Fabre E."/>
            <person name="Fairhead C."/>
            <person name="Ferry-Dumazet H."/>
            <person name="Groppi A."/>
            <person name="Hantraye F."/>
            <person name="Hennequin C."/>
            <person name="Jauniaux N."/>
            <person name="Joyet P."/>
            <person name="Kachouri R."/>
            <person name="Kerrest A."/>
            <person name="Koszul R."/>
            <person name="Lemaire M."/>
            <person name="Lesur I."/>
            <person name="Ma L."/>
            <person name="Muller H."/>
            <person name="Nicaud J.-M."/>
            <person name="Nikolski M."/>
            <person name="Oztas S."/>
            <person name="Ozier-Kalogeropoulos O."/>
            <person name="Pellenz S."/>
            <person name="Potier S."/>
            <person name="Richard G.-F."/>
            <person name="Straub M.-L."/>
            <person name="Suleau A."/>
            <person name="Swennen D."/>
            <person name="Tekaia F."/>
            <person name="Wesolowski-Louvel M."/>
            <person name="Westhof E."/>
            <person name="Wirth B."/>
            <person name="Zeniou-Meyer M."/>
            <person name="Zivanovic Y."/>
            <person name="Bolotin-Fukuhara M."/>
            <person name="Thierry A."/>
            <person name="Bouchier C."/>
            <person name="Caudron B."/>
            <person name="Scarpelli C."/>
            <person name="Gaillardin C."/>
            <person name="Weissenbach J."/>
            <person name="Wincker P."/>
            <person name="Souciet J.-L."/>
        </authorList>
    </citation>
    <scope>NUCLEOTIDE SEQUENCE [LARGE SCALE GENOMIC DNA]</scope>
    <source>
        <strain>ATCC 2001 / BCRC 20586 / JCM 3761 / NBRC 0622 / NRRL Y-65 / CBS 138</strain>
    </source>
</reference>
<keyword id="KW-0067">ATP-binding</keyword>
<keyword id="KW-0119">Carbohydrate metabolism</keyword>
<keyword id="KW-0418">Kinase</keyword>
<keyword id="KW-0472">Membrane</keyword>
<keyword id="KW-0547">Nucleotide-binding</keyword>
<keyword id="KW-0539">Nucleus</keyword>
<keyword id="KW-0597">Phosphoprotein</keyword>
<keyword id="KW-1185">Reference proteome</keyword>
<keyword id="KW-0723">Serine/threonine-protein kinase</keyword>
<keyword id="KW-0808">Transferase</keyword>
<comment type="function">
    <text evidence="1">Essential for release from glucose repression. It interacts and has functional relationship to the regulatory protein SNF4. Could phosphorylate CAT8 (By similarity).</text>
</comment>
<comment type="catalytic activity">
    <reaction>
        <text>L-seryl-[protein] + ATP = O-phospho-L-seryl-[protein] + ADP + H(+)</text>
        <dbReference type="Rhea" id="RHEA:17989"/>
        <dbReference type="Rhea" id="RHEA-COMP:9863"/>
        <dbReference type="Rhea" id="RHEA-COMP:11604"/>
        <dbReference type="ChEBI" id="CHEBI:15378"/>
        <dbReference type="ChEBI" id="CHEBI:29999"/>
        <dbReference type="ChEBI" id="CHEBI:30616"/>
        <dbReference type="ChEBI" id="CHEBI:83421"/>
        <dbReference type="ChEBI" id="CHEBI:456216"/>
        <dbReference type="EC" id="2.7.11.1"/>
    </reaction>
</comment>
<comment type="catalytic activity">
    <reaction>
        <text>L-threonyl-[protein] + ATP = O-phospho-L-threonyl-[protein] + ADP + H(+)</text>
        <dbReference type="Rhea" id="RHEA:46608"/>
        <dbReference type="Rhea" id="RHEA-COMP:11060"/>
        <dbReference type="Rhea" id="RHEA-COMP:11605"/>
        <dbReference type="ChEBI" id="CHEBI:15378"/>
        <dbReference type="ChEBI" id="CHEBI:30013"/>
        <dbReference type="ChEBI" id="CHEBI:30616"/>
        <dbReference type="ChEBI" id="CHEBI:61977"/>
        <dbReference type="ChEBI" id="CHEBI:456216"/>
        <dbReference type="EC" id="2.7.11.1"/>
    </reaction>
</comment>
<comment type="subcellular location">
    <subcellularLocation>
        <location evidence="1">Nucleus membrane</location>
        <topology evidence="1">Peripheral membrane protein</topology>
    </subcellularLocation>
</comment>
<comment type="similarity">
    <text evidence="5">Belongs to the protein kinase superfamily. CAMK Ser/Thr protein kinase family. SNF1 subfamily.</text>
</comment>
<dbReference type="EC" id="2.7.11.1"/>
<dbReference type="EMBL" id="L78130">
    <property type="protein sequence ID" value="AAB48642.1"/>
    <property type="molecule type" value="Genomic_DNA"/>
</dbReference>
<dbReference type="EMBL" id="CR380959">
    <property type="protein sequence ID" value="CAG62709.1"/>
    <property type="molecule type" value="Genomic_DNA"/>
</dbReference>
<dbReference type="RefSeq" id="XP_449733.1">
    <property type="nucleotide sequence ID" value="XM_449733.1"/>
</dbReference>
<dbReference type="SMR" id="Q00372"/>
<dbReference type="FunCoup" id="Q00372">
    <property type="interactions" value="1165"/>
</dbReference>
<dbReference type="STRING" id="284593.Q00372"/>
<dbReference type="EnsemblFungi" id="CAGL0M08910g-T">
    <property type="protein sequence ID" value="CAGL0M08910g-T-p1"/>
    <property type="gene ID" value="CAGL0M08910g"/>
</dbReference>
<dbReference type="GeneID" id="2891294"/>
<dbReference type="KEGG" id="cgr:2891294"/>
<dbReference type="CGD" id="CAL0136473">
    <property type="gene designation" value="SNF1"/>
</dbReference>
<dbReference type="VEuPathDB" id="FungiDB:B1J91_M08910g"/>
<dbReference type="VEuPathDB" id="FungiDB:CAGL0M08910g"/>
<dbReference type="eggNOG" id="KOG0583">
    <property type="taxonomic scope" value="Eukaryota"/>
</dbReference>
<dbReference type="HOGENOM" id="CLU_000288_59_3_1"/>
<dbReference type="InParanoid" id="Q00372"/>
<dbReference type="OMA" id="SKTKWHF"/>
<dbReference type="BRENDA" id="2.7.11.1">
    <property type="organism ID" value="1113"/>
</dbReference>
<dbReference type="Proteomes" id="UP000002428">
    <property type="component" value="Chromosome M"/>
</dbReference>
<dbReference type="GO" id="GO:0000144">
    <property type="term" value="C:cellular bud neck septin ring"/>
    <property type="evidence" value="ECO:0007669"/>
    <property type="project" value="EnsemblFungi"/>
</dbReference>
<dbReference type="GO" id="GO:0005641">
    <property type="term" value="C:nuclear envelope lumen"/>
    <property type="evidence" value="ECO:0007669"/>
    <property type="project" value="EnsemblFungi"/>
</dbReference>
<dbReference type="GO" id="GO:0031965">
    <property type="term" value="C:nuclear membrane"/>
    <property type="evidence" value="ECO:0007669"/>
    <property type="project" value="UniProtKB-SubCell"/>
</dbReference>
<dbReference type="GO" id="GO:0031588">
    <property type="term" value="C:nucleotide-activated protein kinase complex"/>
    <property type="evidence" value="ECO:0007669"/>
    <property type="project" value="EnsemblFungi"/>
</dbReference>
<dbReference type="GO" id="GO:0005774">
    <property type="term" value="C:vacuolar membrane"/>
    <property type="evidence" value="ECO:0007669"/>
    <property type="project" value="EnsemblFungi"/>
</dbReference>
<dbReference type="GO" id="GO:0004679">
    <property type="term" value="F:AMP-activated protein kinase activity"/>
    <property type="evidence" value="ECO:0007669"/>
    <property type="project" value="EnsemblFungi"/>
</dbReference>
<dbReference type="GO" id="GO:0005524">
    <property type="term" value="F:ATP binding"/>
    <property type="evidence" value="ECO:0007669"/>
    <property type="project" value="UniProtKB-KW"/>
</dbReference>
<dbReference type="GO" id="GO:0005085">
    <property type="term" value="F:guanyl-nucleotide exchange factor activity"/>
    <property type="evidence" value="ECO:0007669"/>
    <property type="project" value="EnsemblFungi"/>
</dbReference>
<dbReference type="GO" id="GO:0042802">
    <property type="term" value="F:identical protein binding"/>
    <property type="evidence" value="ECO:0007669"/>
    <property type="project" value="EnsemblFungi"/>
</dbReference>
<dbReference type="GO" id="GO:0106310">
    <property type="term" value="F:protein serine kinase activity"/>
    <property type="evidence" value="ECO:0007669"/>
    <property type="project" value="RHEA"/>
</dbReference>
<dbReference type="GO" id="GO:0061762">
    <property type="term" value="P:CAMKK-AMPK signaling cascade"/>
    <property type="evidence" value="ECO:0007669"/>
    <property type="project" value="EnsemblFungi"/>
</dbReference>
<dbReference type="GO" id="GO:0042149">
    <property type="term" value="P:cellular response to glucose starvation"/>
    <property type="evidence" value="ECO:0007669"/>
    <property type="project" value="EnsemblFungi"/>
</dbReference>
<dbReference type="GO" id="GO:0000132">
    <property type="term" value="P:establishment of mitotic spindle orientation"/>
    <property type="evidence" value="ECO:0007669"/>
    <property type="project" value="EnsemblFungi"/>
</dbReference>
<dbReference type="GO" id="GO:0071940">
    <property type="term" value="P:fungal-type cell wall assembly"/>
    <property type="evidence" value="ECO:0007669"/>
    <property type="project" value="EnsemblFungi"/>
</dbReference>
<dbReference type="GO" id="GO:0001403">
    <property type="term" value="P:invasive growth in response to glucose limitation"/>
    <property type="evidence" value="ECO:0007669"/>
    <property type="project" value="EnsemblFungi"/>
</dbReference>
<dbReference type="GO" id="GO:0010920">
    <property type="term" value="P:negative regulation of inositol phosphate biosynthetic process"/>
    <property type="evidence" value="ECO:0007669"/>
    <property type="project" value="EnsemblFungi"/>
</dbReference>
<dbReference type="GO" id="GO:1904262">
    <property type="term" value="P:negative regulation of TORC1 signaling"/>
    <property type="evidence" value="ECO:0007669"/>
    <property type="project" value="EnsemblFungi"/>
</dbReference>
<dbReference type="GO" id="GO:0017148">
    <property type="term" value="P:negative regulation of translation"/>
    <property type="evidence" value="ECO:0007669"/>
    <property type="project" value="EnsemblFungi"/>
</dbReference>
<dbReference type="GO" id="GO:1900436">
    <property type="term" value="P:positive regulation of filamentous growth of a population of unicellular organisms in response to starvation"/>
    <property type="evidence" value="ECO:0007669"/>
    <property type="project" value="EnsemblFungi"/>
</dbReference>
<dbReference type="GO" id="GO:0045722">
    <property type="term" value="P:positive regulation of gluconeogenesis"/>
    <property type="evidence" value="ECO:0007669"/>
    <property type="project" value="EnsemblFungi"/>
</dbReference>
<dbReference type="GO" id="GO:0016239">
    <property type="term" value="P:positive regulation of macroautophagy"/>
    <property type="evidence" value="ECO:0007669"/>
    <property type="project" value="EnsemblFungi"/>
</dbReference>
<dbReference type="GO" id="GO:2000222">
    <property type="term" value="P:positive regulation of pseudohyphal growth"/>
    <property type="evidence" value="ECO:0007669"/>
    <property type="project" value="EnsemblFungi"/>
</dbReference>
<dbReference type="GO" id="GO:0045944">
    <property type="term" value="P:positive regulation of transcription by RNA polymerase II"/>
    <property type="evidence" value="ECO:0007669"/>
    <property type="project" value="EnsemblFungi"/>
</dbReference>
<dbReference type="GO" id="GO:2000217">
    <property type="term" value="P:regulation of invasive growth in response to glucose limitation"/>
    <property type="evidence" value="ECO:0007669"/>
    <property type="project" value="EnsemblFungi"/>
</dbReference>
<dbReference type="GO" id="GO:0034976">
    <property type="term" value="P:response to endoplasmic reticulum stress"/>
    <property type="evidence" value="ECO:0007669"/>
    <property type="project" value="EnsemblFungi"/>
</dbReference>
<dbReference type="GO" id="GO:0006986">
    <property type="term" value="P:response to unfolded protein"/>
    <property type="evidence" value="ECO:0007669"/>
    <property type="project" value="EnsemblFungi"/>
</dbReference>
<dbReference type="GO" id="GO:0090606">
    <property type="term" value="P:single-species surface biofilm formation"/>
    <property type="evidence" value="ECO:0007669"/>
    <property type="project" value="EnsemblFungi"/>
</dbReference>
<dbReference type="GO" id="GO:0032933">
    <property type="term" value="P:SREBP signaling pathway"/>
    <property type="evidence" value="ECO:0007669"/>
    <property type="project" value="EnsemblFungi"/>
</dbReference>
<dbReference type="GO" id="GO:0005993">
    <property type="term" value="P:trehalose catabolic process"/>
    <property type="evidence" value="ECO:0000315"/>
    <property type="project" value="CGD"/>
</dbReference>
<dbReference type="CDD" id="cd12122">
    <property type="entry name" value="AMPKA_C"/>
    <property type="match status" value="1"/>
</dbReference>
<dbReference type="CDD" id="cd14079">
    <property type="entry name" value="STKc_AMPK_alpha"/>
    <property type="match status" value="1"/>
</dbReference>
<dbReference type="CDD" id="cd14334">
    <property type="entry name" value="UBA_SNF1_fungi"/>
    <property type="match status" value="1"/>
</dbReference>
<dbReference type="FunFam" id="1.10.510.10:FF:000544">
    <property type="entry name" value="Non-specific serine/threonine protein kinase"/>
    <property type="match status" value="1"/>
</dbReference>
<dbReference type="FunFam" id="1.10.8.10:FF:000069">
    <property type="entry name" value="Non-specific serine/threonine protein kinase"/>
    <property type="match status" value="1"/>
</dbReference>
<dbReference type="FunFam" id="3.30.200.20:FF:000236">
    <property type="entry name" value="Non-specific serine/threonine protein kinase"/>
    <property type="match status" value="1"/>
</dbReference>
<dbReference type="FunFam" id="3.30.310.80:FF:000017">
    <property type="entry name" value="Non-specific serine/threonine protein kinase"/>
    <property type="match status" value="1"/>
</dbReference>
<dbReference type="Gene3D" id="1.10.8.10">
    <property type="entry name" value="DNA helicase RuvA subunit, C-terminal domain"/>
    <property type="match status" value="1"/>
</dbReference>
<dbReference type="Gene3D" id="3.30.310.80">
    <property type="entry name" value="Kinase associated domain 1, KA1"/>
    <property type="match status" value="1"/>
</dbReference>
<dbReference type="Gene3D" id="3.30.200.20">
    <property type="entry name" value="Phosphorylase Kinase, domain 1"/>
    <property type="match status" value="1"/>
</dbReference>
<dbReference type="Gene3D" id="1.10.510.10">
    <property type="entry name" value="Transferase(Phosphotransferase) domain 1"/>
    <property type="match status" value="1"/>
</dbReference>
<dbReference type="InterPro" id="IPR032270">
    <property type="entry name" value="AMPK_C"/>
</dbReference>
<dbReference type="InterPro" id="IPR028375">
    <property type="entry name" value="KA1/Ssp2_C"/>
</dbReference>
<dbReference type="InterPro" id="IPR011009">
    <property type="entry name" value="Kinase-like_dom_sf"/>
</dbReference>
<dbReference type="InterPro" id="IPR000719">
    <property type="entry name" value="Prot_kinase_dom"/>
</dbReference>
<dbReference type="InterPro" id="IPR017441">
    <property type="entry name" value="Protein_kinase_ATP_BS"/>
</dbReference>
<dbReference type="InterPro" id="IPR008271">
    <property type="entry name" value="Ser/Thr_kinase_AS"/>
</dbReference>
<dbReference type="InterPro" id="IPR013896">
    <property type="entry name" value="SNF1_UBA"/>
</dbReference>
<dbReference type="PANTHER" id="PTHR24346">
    <property type="entry name" value="MAP/MICROTUBULE AFFINITY-REGULATING KINASE"/>
    <property type="match status" value="1"/>
</dbReference>
<dbReference type="PANTHER" id="PTHR24346:SF110">
    <property type="entry name" value="NON-SPECIFIC SERINE_THREONINE PROTEIN KINASE"/>
    <property type="match status" value="1"/>
</dbReference>
<dbReference type="Pfam" id="PF16579">
    <property type="entry name" value="AdenylateSensor"/>
    <property type="match status" value="1"/>
</dbReference>
<dbReference type="Pfam" id="PF00069">
    <property type="entry name" value="Pkinase"/>
    <property type="match status" value="1"/>
</dbReference>
<dbReference type="Pfam" id="PF08587">
    <property type="entry name" value="UBA_2"/>
    <property type="match status" value="1"/>
</dbReference>
<dbReference type="SMART" id="SM00220">
    <property type="entry name" value="S_TKc"/>
    <property type="match status" value="1"/>
</dbReference>
<dbReference type="SUPFAM" id="SSF103243">
    <property type="entry name" value="KA1-like"/>
    <property type="match status" value="1"/>
</dbReference>
<dbReference type="SUPFAM" id="SSF56112">
    <property type="entry name" value="Protein kinase-like (PK-like)"/>
    <property type="match status" value="1"/>
</dbReference>
<dbReference type="PROSITE" id="PS00107">
    <property type="entry name" value="PROTEIN_KINASE_ATP"/>
    <property type="match status" value="1"/>
</dbReference>
<dbReference type="PROSITE" id="PS50011">
    <property type="entry name" value="PROTEIN_KINASE_DOM"/>
    <property type="match status" value="1"/>
</dbReference>
<dbReference type="PROSITE" id="PS00108">
    <property type="entry name" value="PROTEIN_KINASE_ST"/>
    <property type="match status" value="1"/>
</dbReference>
<name>SNF1_CANGA</name>